<dbReference type="EMBL" id="CR860761">
    <property type="protein sequence ID" value="CAH92874.1"/>
    <property type="molecule type" value="mRNA"/>
</dbReference>
<dbReference type="EMBL" id="CR861250">
    <property type="protein sequence ID" value="CAH93319.1"/>
    <property type="molecule type" value="mRNA"/>
</dbReference>
<dbReference type="RefSeq" id="NP_001126954.1">
    <property type="nucleotide sequence ID" value="NM_001133482.1"/>
</dbReference>
<dbReference type="RefSeq" id="XP_009250292.1">
    <property type="nucleotide sequence ID" value="XM_009252017.4"/>
</dbReference>
<dbReference type="RefSeq" id="XP_009250293.1">
    <property type="nucleotide sequence ID" value="XM_009252018.1"/>
</dbReference>
<dbReference type="BMRB" id="Q5R4J7"/>
<dbReference type="SMR" id="Q5R4J7"/>
<dbReference type="FunCoup" id="Q5R4J7">
    <property type="interactions" value="4466"/>
</dbReference>
<dbReference type="STRING" id="9601.ENSPPYP00000009686"/>
<dbReference type="Ensembl" id="ENSPPYT00000010071.3">
    <property type="protein sequence ID" value="ENSPPYP00000009686.2"/>
    <property type="gene ID" value="ENSPPYG00000008626.3"/>
</dbReference>
<dbReference type="GeneID" id="100173972"/>
<dbReference type="KEGG" id="pon:100173972"/>
<dbReference type="CTD" id="2885"/>
<dbReference type="eggNOG" id="KOG3601">
    <property type="taxonomic scope" value="Eukaryota"/>
</dbReference>
<dbReference type="GeneTree" id="ENSGT00940000155738"/>
<dbReference type="HOGENOM" id="CLU_073617_1_0_1"/>
<dbReference type="InParanoid" id="Q5R4J7"/>
<dbReference type="OMA" id="YVCPYNS"/>
<dbReference type="OrthoDB" id="10255964at2759"/>
<dbReference type="TreeFam" id="TF354288"/>
<dbReference type="Proteomes" id="UP000001595">
    <property type="component" value="Chromosome 17"/>
</dbReference>
<dbReference type="GO" id="GO:0005938">
    <property type="term" value="C:cell cortex"/>
    <property type="evidence" value="ECO:0007669"/>
    <property type="project" value="Ensembl"/>
</dbReference>
<dbReference type="GO" id="GO:0005911">
    <property type="term" value="C:cell-cell junction"/>
    <property type="evidence" value="ECO:0007669"/>
    <property type="project" value="Ensembl"/>
</dbReference>
<dbReference type="GO" id="GO:0005813">
    <property type="term" value="C:centrosome"/>
    <property type="evidence" value="ECO:0007669"/>
    <property type="project" value="Ensembl"/>
</dbReference>
<dbReference type="GO" id="GO:0008180">
    <property type="term" value="C:COP9 signalosome"/>
    <property type="evidence" value="ECO:0000250"/>
    <property type="project" value="UniProtKB"/>
</dbReference>
<dbReference type="GO" id="GO:0005737">
    <property type="term" value="C:cytoplasm"/>
    <property type="evidence" value="ECO:0000250"/>
    <property type="project" value="UniProtKB"/>
</dbReference>
<dbReference type="GO" id="GO:0005829">
    <property type="term" value="C:cytosol"/>
    <property type="evidence" value="ECO:0007669"/>
    <property type="project" value="Ensembl"/>
</dbReference>
<dbReference type="GO" id="GO:0005768">
    <property type="term" value="C:endosome"/>
    <property type="evidence" value="ECO:0000250"/>
    <property type="project" value="UniProtKB"/>
</dbReference>
<dbReference type="GO" id="GO:0005794">
    <property type="term" value="C:Golgi apparatus"/>
    <property type="evidence" value="ECO:0007669"/>
    <property type="project" value="UniProtKB-SubCell"/>
</dbReference>
<dbReference type="GO" id="GO:0070436">
    <property type="term" value="C:Grb2-EGFR complex"/>
    <property type="evidence" value="ECO:0007669"/>
    <property type="project" value="Ensembl"/>
</dbReference>
<dbReference type="GO" id="GO:0005634">
    <property type="term" value="C:nucleus"/>
    <property type="evidence" value="ECO:0000250"/>
    <property type="project" value="UniProtKB"/>
</dbReference>
<dbReference type="GO" id="GO:0012506">
    <property type="term" value="C:vesicle membrane"/>
    <property type="evidence" value="ECO:0007669"/>
    <property type="project" value="Ensembl"/>
</dbReference>
<dbReference type="GO" id="GO:0046875">
    <property type="term" value="F:ephrin receptor binding"/>
    <property type="evidence" value="ECO:0007669"/>
    <property type="project" value="Ensembl"/>
</dbReference>
<dbReference type="GO" id="GO:0005154">
    <property type="term" value="F:epidermal growth factor receptor binding"/>
    <property type="evidence" value="ECO:0007669"/>
    <property type="project" value="Ensembl"/>
</dbReference>
<dbReference type="GO" id="GO:0005091">
    <property type="term" value="F:guanyl-nucleotide exchange factor adaptor activity"/>
    <property type="evidence" value="ECO:0007669"/>
    <property type="project" value="Ensembl"/>
</dbReference>
<dbReference type="GO" id="GO:0042802">
    <property type="term" value="F:identical protein binding"/>
    <property type="evidence" value="ECO:0007669"/>
    <property type="project" value="Ensembl"/>
</dbReference>
<dbReference type="GO" id="GO:0043560">
    <property type="term" value="F:insulin receptor substrate binding"/>
    <property type="evidence" value="ECO:0007669"/>
    <property type="project" value="Ensembl"/>
</dbReference>
<dbReference type="GO" id="GO:0005168">
    <property type="term" value="F:neurotrophin TRKA receptor binding"/>
    <property type="evidence" value="ECO:0007669"/>
    <property type="project" value="Ensembl"/>
</dbReference>
<dbReference type="GO" id="GO:0001784">
    <property type="term" value="F:phosphotyrosine residue binding"/>
    <property type="evidence" value="ECO:0007669"/>
    <property type="project" value="Ensembl"/>
</dbReference>
<dbReference type="GO" id="GO:0019903">
    <property type="term" value="F:protein phosphatase binding"/>
    <property type="evidence" value="ECO:0007669"/>
    <property type="project" value="Ensembl"/>
</dbReference>
<dbReference type="GO" id="GO:0017124">
    <property type="term" value="F:SH3 domain binding"/>
    <property type="evidence" value="ECO:0000250"/>
    <property type="project" value="UniProtKB"/>
</dbReference>
<dbReference type="GO" id="GO:0005068">
    <property type="term" value="F:transmembrane receptor protein tyrosine kinase adaptor activity"/>
    <property type="evidence" value="ECO:0007669"/>
    <property type="project" value="Ensembl"/>
</dbReference>
<dbReference type="GO" id="GO:0030036">
    <property type="term" value="P:actin cytoskeleton organization"/>
    <property type="evidence" value="ECO:0007669"/>
    <property type="project" value="Ensembl"/>
</dbReference>
<dbReference type="GO" id="GO:0050853">
    <property type="term" value="P:B cell receptor signaling pathway"/>
    <property type="evidence" value="ECO:0007669"/>
    <property type="project" value="Ensembl"/>
</dbReference>
<dbReference type="GO" id="GO:0060670">
    <property type="term" value="P:branching involved in labyrinthine layer morphogenesis"/>
    <property type="evidence" value="ECO:0007669"/>
    <property type="project" value="Ensembl"/>
</dbReference>
<dbReference type="GO" id="GO:0071479">
    <property type="term" value="P:cellular response to ionizing radiation"/>
    <property type="evidence" value="ECO:0007669"/>
    <property type="project" value="Ensembl"/>
</dbReference>
<dbReference type="GO" id="GO:0035987">
    <property type="term" value="P:endodermal cell differentiation"/>
    <property type="evidence" value="ECO:0007669"/>
    <property type="project" value="Ensembl"/>
</dbReference>
<dbReference type="GO" id="GO:0007173">
    <property type="term" value="P:epidermal growth factor receptor signaling pathway"/>
    <property type="evidence" value="ECO:0007669"/>
    <property type="project" value="Ensembl"/>
</dbReference>
<dbReference type="GO" id="GO:0008543">
    <property type="term" value="P:fibroblast growth factor receptor signaling pathway"/>
    <property type="evidence" value="ECO:0007669"/>
    <property type="project" value="Ensembl"/>
</dbReference>
<dbReference type="GO" id="GO:0008286">
    <property type="term" value="P:insulin receptor signaling pathway"/>
    <property type="evidence" value="ECO:0007669"/>
    <property type="project" value="Ensembl"/>
</dbReference>
<dbReference type="GO" id="GO:0048009">
    <property type="term" value="P:insulin-like growth factor receptor signaling pathway"/>
    <property type="evidence" value="ECO:0007669"/>
    <property type="project" value="Ensembl"/>
</dbReference>
<dbReference type="GO" id="GO:0042552">
    <property type="term" value="P:myelination"/>
    <property type="evidence" value="ECO:0007669"/>
    <property type="project" value="Ensembl"/>
</dbReference>
<dbReference type="GO" id="GO:0042267">
    <property type="term" value="P:natural killer cell mediated cytotoxicity"/>
    <property type="evidence" value="ECO:0007669"/>
    <property type="project" value="Ensembl"/>
</dbReference>
<dbReference type="GO" id="GO:0045953">
    <property type="term" value="P:negative regulation of natural killer cell mediated cytotoxicity"/>
    <property type="evidence" value="ECO:0007669"/>
    <property type="project" value="Ensembl"/>
</dbReference>
<dbReference type="GO" id="GO:0030838">
    <property type="term" value="P:positive regulation of actin filament polymerization"/>
    <property type="evidence" value="ECO:0007669"/>
    <property type="project" value="Ensembl"/>
</dbReference>
<dbReference type="GO" id="GO:2000379">
    <property type="term" value="P:positive regulation of reactive oxygen species metabolic process"/>
    <property type="evidence" value="ECO:0007669"/>
    <property type="project" value="Ensembl"/>
</dbReference>
<dbReference type="GO" id="GO:0031623">
    <property type="term" value="P:receptor internalization"/>
    <property type="evidence" value="ECO:0007669"/>
    <property type="project" value="Ensembl"/>
</dbReference>
<dbReference type="GO" id="GO:0043408">
    <property type="term" value="P:regulation of MAPK cascade"/>
    <property type="evidence" value="ECO:0007669"/>
    <property type="project" value="Ensembl"/>
</dbReference>
<dbReference type="GO" id="GO:0014044">
    <property type="term" value="P:Schwann cell development"/>
    <property type="evidence" value="ECO:0007669"/>
    <property type="project" value="Ensembl"/>
</dbReference>
<dbReference type="GO" id="GO:0042770">
    <property type="term" value="P:signal transduction in response to DNA damage"/>
    <property type="evidence" value="ECO:0007669"/>
    <property type="project" value="Ensembl"/>
</dbReference>
<dbReference type="GO" id="GO:0042110">
    <property type="term" value="P:T cell activation"/>
    <property type="evidence" value="ECO:0007669"/>
    <property type="project" value="Ensembl"/>
</dbReference>
<dbReference type="CDD" id="cd09941">
    <property type="entry name" value="SH2_Grb2_like"/>
    <property type="match status" value="1"/>
</dbReference>
<dbReference type="CDD" id="cd11949">
    <property type="entry name" value="SH3_GRB2_C"/>
    <property type="match status" value="1"/>
</dbReference>
<dbReference type="CDD" id="cd11946">
    <property type="entry name" value="SH3_GRB2_N"/>
    <property type="match status" value="1"/>
</dbReference>
<dbReference type="FunFam" id="2.30.30.40:FF:000067">
    <property type="entry name" value="Growth factor receptor-bound protein 2"/>
    <property type="match status" value="1"/>
</dbReference>
<dbReference type="FunFam" id="2.30.30.40:FF:000076">
    <property type="entry name" value="Growth factor receptor-bound protein 2"/>
    <property type="match status" value="1"/>
</dbReference>
<dbReference type="FunFam" id="3.30.505.10:FF:000022">
    <property type="entry name" value="Growth factor receptor-bound protein 2"/>
    <property type="match status" value="1"/>
</dbReference>
<dbReference type="Gene3D" id="3.30.505.10">
    <property type="entry name" value="SH2 domain"/>
    <property type="match status" value="1"/>
</dbReference>
<dbReference type="Gene3D" id="2.30.30.40">
    <property type="entry name" value="SH3 Domains"/>
    <property type="match status" value="2"/>
</dbReference>
<dbReference type="InterPro" id="IPR043539">
    <property type="entry name" value="Grb2-like"/>
</dbReference>
<dbReference type="InterPro" id="IPR035643">
    <property type="entry name" value="GRB2_C_SH3"/>
</dbReference>
<dbReference type="InterPro" id="IPR035641">
    <property type="entry name" value="GRB2_N_SH3"/>
</dbReference>
<dbReference type="InterPro" id="IPR000980">
    <property type="entry name" value="SH2"/>
</dbReference>
<dbReference type="InterPro" id="IPR036860">
    <property type="entry name" value="SH2_dom_sf"/>
</dbReference>
<dbReference type="InterPro" id="IPR036028">
    <property type="entry name" value="SH3-like_dom_sf"/>
</dbReference>
<dbReference type="InterPro" id="IPR001452">
    <property type="entry name" value="SH3_domain"/>
</dbReference>
<dbReference type="PANTHER" id="PTHR46037">
    <property type="entry name" value="PROTEIN ENHANCER OF SEVENLESS 2B"/>
    <property type="match status" value="1"/>
</dbReference>
<dbReference type="Pfam" id="PF00017">
    <property type="entry name" value="SH2"/>
    <property type="match status" value="1"/>
</dbReference>
<dbReference type="Pfam" id="PF00018">
    <property type="entry name" value="SH3_1"/>
    <property type="match status" value="2"/>
</dbReference>
<dbReference type="PRINTS" id="PR00499">
    <property type="entry name" value="P67PHOX"/>
</dbReference>
<dbReference type="PRINTS" id="PR00401">
    <property type="entry name" value="SH2DOMAIN"/>
</dbReference>
<dbReference type="PRINTS" id="PR00452">
    <property type="entry name" value="SH3DOMAIN"/>
</dbReference>
<dbReference type="SMART" id="SM00252">
    <property type="entry name" value="SH2"/>
    <property type="match status" value="1"/>
</dbReference>
<dbReference type="SMART" id="SM00326">
    <property type="entry name" value="SH3"/>
    <property type="match status" value="2"/>
</dbReference>
<dbReference type="SUPFAM" id="SSF55550">
    <property type="entry name" value="SH2 domain"/>
    <property type="match status" value="1"/>
</dbReference>
<dbReference type="SUPFAM" id="SSF50044">
    <property type="entry name" value="SH3-domain"/>
    <property type="match status" value="2"/>
</dbReference>
<dbReference type="PROSITE" id="PS50001">
    <property type="entry name" value="SH2"/>
    <property type="match status" value="1"/>
</dbReference>
<dbReference type="PROSITE" id="PS50002">
    <property type="entry name" value="SH3"/>
    <property type="match status" value="2"/>
</dbReference>
<sequence>MEAIAKYDFKATADDELSFKRGDILKVLNEECDQNWYKAELNGKDGFIPKNYIEMKPHPWFFGKIPRAKAEEMLSKQRHDGAFLIRESESAPGDFSLSVKFGNDVQHFKVLRDGAGKYFLWVVKFNSLNELVDYHRSTSVSRNQQIFLRDIEQVPQQPTYVQALFDFDPQEDGELGFRRGDFIHVMDNSDPNWWKGACHGQTGMFPRNYVTPVNRNV</sequence>
<protein>
    <recommendedName>
        <fullName>Growth factor receptor-bound protein 2</fullName>
    </recommendedName>
    <alternativeName>
        <fullName>Adapter protein GRB2</fullName>
    </alternativeName>
    <alternativeName>
        <fullName>SH2/SH3 adapter GRB2</fullName>
    </alternativeName>
</protein>
<reference key="1">
    <citation type="submission" date="2004-11" db="EMBL/GenBank/DDBJ databases">
        <authorList>
            <consortium name="The German cDNA consortium"/>
        </authorList>
    </citation>
    <scope>NUCLEOTIDE SEQUENCE [LARGE SCALE MRNA]</scope>
    <source>
        <tissue>Brain cortex</tissue>
    </source>
</reference>
<organism>
    <name type="scientific">Pongo abelii</name>
    <name type="common">Sumatran orangutan</name>
    <name type="synonym">Pongo pygmaeus abelii</name>
    <dbReference type="NCBI Taxonomy" id="9601"/>
    <lineage>
        <taxon>Eukaryota</taxon>
        <taxon>Metazoa</taxon>
        <taxon>Chordata</taxon>
        <taxon>Craniata</taxon>
        <taxon>Vertebrata</taxon>
        <taxon>Euteleostomi</taxon>
        <taxon>Mammalia</taxon>
        <taxon>Eutheria</taxon>
        <taxon>Euarchontoglires</taxon>
        <taxon>Primates</taxon>
        <taxon>Haplorrhini</taxon>
        <taxon>Catarrhini</taxon>
        <taxon>Hominidae</taxon>
        <taxon>Pongo</taxon>
    </lineage>
</organism>
<evidence type="ECO:0000250" key="1"/>
<evidence type="ECO:0000250" key="2">
    <source>
        <dbReference type="UniProtKB" id="P62993"/>
    </source>
</evidence>
<evidence type="ECO:0000250" key="3">
    <source>
        <dbReference type="UniProtKB" id="Q60631"/>
    </source>
</evidence>
<evidence type="ECO:0000255" key="4">
    <source>
        <dbReference type="PROSITE-ProRule" id="PRU00191"/>
    </source>
</evidence>
<evidence type="ECO:0000255" key="5">
    <source>
        <dbReference type="PROSITE-ProRule" id="PRU00192"/>
    </source>
</evidence>
<evidence type="ECO:0000305" key="6"/>
<feature type="chain" id="PRO_0000088200" description="Growth factor receptor-bound protein 2">
    <location>
        <begin position="1"/>
        <end position="217"/>
    </location>
</feature>
<feature type="domain" description="SH3 1" evidence="5">
    <location>
        <begin position="1"/>
        <end position="58"/>
    </location>
</feature>
<feature type="domain" description="SH2" evidence="4">
    <location>
        <begin position="60"/>
        <end position="152"/>
    </location>
</feature>
<feature type="domain" description="SH3 2" evidence="5">
    <location>
        <begin position="156"/>
        <end position="215"/>
    </location>
</feature>
<feature type="modified residue" description="N-acetylmethionine" evidence="2">
    <location>
        <position position="1"/>
    </location>
</feature>
<feature type="modified residue" description="N6-acetyllysine" evidence="2">
    <location>
        <position position="6"/>
    </location>
</feature>
<feature type="modified residue" description="N6-acetyllysine" evidence="2">
    <location>
        <position position="50"/>
    </location>
</feature>
<feature type="modified residue" description="N6-acetyllysine" evidence="2">
    <location>
        <position position="109"/>
    </location>
</feature>
<feature type="modified residue" description="Phosphotyrosine" evidence="2">
    <location>
        <position position="209"/>
    </location>
</feature>
<feature type="modified residue" description="Phosphothreonine" evidence="2">
    <location>
        <position position="211"/>
    </location>
</feature>
<feature type="cross-link" description="Glycyl lysine isopeptide (Lys-Gly) (interchain with G-Cter in ubiquitin)" evidence="2">
    <location>
        <position position="109"/>
    </location>
</feature>
<proteinExistence type="evidence at transcript level"/>
<gene>
    <name type="primary">GRB2</name>
</gene>
<accession>Q5R4J7</accession>
<name>GRB2_PONAB</name>
<comment type="function">
    <text evidence="2">Non-enzymatic adapter protein that plays a pivotal role in precisely regulated signaling cascades from cell surface receptors to cellular responses, including signaling transduction and gene expression. Thus, participates in many biological processes including regulation of innate and adaptive immunity, autophagy, DNA repair or necroptosis. Controls signaling complexes at the T-cell antigen receptor to facilitate the activation, differentiation, and function of T-cells. Mechanistically, engagement of the TCR leads to phosphorylation of the adapter protein LAT, which serves as docking site for GRB2. In turn, GRB2 establishes a a connection with SOS1 that acts as a guanine nucleotide exchange factor and serves as a critical regulator of KRAS/RAF1 leading to MAPKs translocation to the nucleus and activation. Also plays a role in B-cell activation by amplifying Ca(2+) mobilization and activation of the ERK MAP kinase pathway upon recruitment to the phosphorylated B-cell antigen receptor (BCR). Plays a role in switching between autophagy and programmed necrosis upstream of EGFR by interacting with components of necrosomes including RIPK1 and with autophagy regulators SQSTM1 and BECN1. Regulates miRNA biogenesis by forming a functional ternary complex with AGO2 and DICER1. Functions in the replication stress response by protecting DNA at stalled replication forks from MRE11-mediated degradation. Mechanistically, inhibits RAD51 ATPase activity to stabilize RAD51 on stalled replication forks. Additionally, directly recruits and later releases MRE11 at DNA damage sites during the homology-directed repair (HDR) process.</text>
</comment>
<comment type="subunit">
    <text evidence="2 3">Homodimer. Associates (via SH2 domain) with activated EGF and PDGF receptors (tyrosine phosphorylated) (By similarity). Interacts with PDGFRA (tyrosine phosphorylated); the interaction may be indirect (By similarity). Also associates to other cellular Tyr-phosphorylated proteins such as SIT1, IRS1, IRS2, IRS4, SHC and LNK; probably via the concerted action of both its SH2 and SH3 domains. It also seems to interact with RAS in the signaling pathway leading to DNA synthesis. Interacts with SOS1. Forms a complex with MUC1 and SOS1, through interaction of the SH3 domains with SOS1 and the SH2 domain with phosphorylated MUC1. Interacts with phosphorylated MET (By similarity). Interacts with phosphorylated TOM1L1 (By similarity). Interacts with the phosphorylated C-terminus of SH2B2. Interacts with phosphorylated SIT1, LAX1, LAT, LAT2 and LIME1 upon TCR and/or BCR activation. Interacts with NISCH, PTPNS1 and REPS2 (By similarity). Interacts with syntrophin SNTA1 (By similarity). Interacts (via SH3 domains) with REPS1 (By similarity). Interacts (via SH3 domains) with PIK3C2B. Interacts with CBL and CBLB (By similarity). Interacts with AJUBA and CLNK (By similarity). Interacts (via SH2 domain) with TEK/TIE2 (tyrosine phosphorylated) (By similarity). Interacts with SHB, INPP5D/SHIP1, SKAP1 and SKAP2 (By similarity). Interacts with PTPN11 (By similarity). Interacts with PRNP (By similarity). Interacts with RALGPS1. Interacts with HCST (By similarity). Interacts with KDR (By similarity). Interacts with FLT1 (tyrosine-phosphorylated) (By similarity). Interacts with GAPT and PTPRE. Interacts (via SH2 domain) with KIF26A. Interacts (via SH3 2) with GAB2. Interacts with ADAM15 (By similarity). Interacts with THEMIS2 (By similarity). Interacts (via SH2 domain) with AXL (phosphorylated). Interacts (via SH2 domain) with KIT (phosphorylated). Interacts with PTPRJ and BCR. Interacts with PTPN23. Interacts with FLT4 (tyrosine phosphorylated). Interacts with EPHB1 and SHC1; activates the MAPK/ERK cascade to regulate cell migration. Part of a complex including TNK2, GRB2, LTK and one receptor tyrosine kinase (RTK) such as AXL and PDGFRL, in which GRB2 promotes RTK recruitment by TNK2. Interacts (via SH2 domain) with CSF1R (tyrosine phosphorylated). Interacts with ERBB4. Interacts with NTRK1 (phosphorylated upon ligand-binding). Interacts with PTK2/FAK1 (tyrosine phosphorylated). Interacts with PTK2B/PYK2 (tyrosine phosphorylated). Interacts (via SH3 domains) with GAREM1 isoform 1 (via proline-rich domain and tyrosine phosphorylated); the interaction occurs upon EGF stimulation (By similarity). Interacts with DAB2 (By similarity). Interacts with TESPA1 (By similarity). Interacts with PLCG1, LAT and THEMIS upon TCR activation in thymocytes; the association is weaker in the absence of TESPA1 (By similarity). Interacts with CD28 (By similarity). Interacts with RAB13; may recruit RAB13 to the leading edge of migrating endothelial cells where it can activate RHOA (By similarity). Interacts with ASAP3 (phosphorylated form) (By similarity). Interacts (via SH2 domain) with PTPRH (phosphorylated form) (By similarity). Interacts with PTPRO (phosphorylated form) (By similarity). Interacts with PTPRB (phosphorylated form) (By similarity). Interacts (via SH3 domain 2) with PRR14 (via proline-rich region). Interacts with FCRL6 (tyrosine phosphorylated form). Interacts with RHEX (via tyrosine-phosphorylated form). Interacts with DENND2B. Interacts with SPRY2 (By similarity). Interacts with LRRC8A (By similarity). Interacts with PEAK1 (By similarity). Interacts with FCRL1 (By similarity). Interacts with RAD51; the interaction inhibits RAD51 ATPase to stabilize RAD51-DNA complex at stalled replication forks. Interacts with MRE11; this interaction recruits MRE11 to the DNA damage sites. Interacts with RIPK1 ans SQSTM1; these interactions play a critical role in regulating programmed necrosis (By similarity). Interacts with AGO2; this interaction is important for the formation of a ternary complex containing GRB2, AGO2 and DICER1 (By similarity). Interacts with TIGIT; this interaction inhibits PI3K and MAPK signaling cascades (By similarity). Interacts with CD226; this interaction leads to activation of VAV1, PI3K and PLCG1 (By similarity).</text>
</comment>
<comment type="subcellular location">
    <subcellularLocation>
        <location evidence="2">Nucleus</location>
    </subcellularLocation>
    <subcellularLocation>
        <location evidence="2">Cytoplasm</location>
    </subcellularLocation>
    <subcellularLocation>
        <location evidence="2">Endosome</location>
    </subcellularLocation>
    <subcellularLocation>
        <location evidence="3">Golgi apparatus</location>
    </subcellularLocation>
</comment>
<comment type="domain">
    <text evidence="1">The SH3 domains mediate interaction with RALGPS1 and SHB.</text>
</comment>
<comment type="PTM">
    <text evidence="2">Phosphorylation of Tyr-209 in the C-terminal SH3 domain reduces its binding to SOS1.</text>
</comment>
<comment type="PTM">
    <text evidence="2">Ubiquitinated by RNF173, leading to proteasomal degradation and inhibition of the RAF/MEK/ERK pathway. In the nucleus, polyubiquitinated by RBBP6 at Lys-109 at DNA damage sites.</text>
</comment>
<comment type="similarity">
    <text evidence="6">Belongs to the GRB2/sem-5/DRK family.</text>
</comment>
<keyword id="KW-0007">Acetylation</keyword>
<keyword id="KW-0963">Cytoplasm</keyword>
<keyword id="KW-0967">Endosome</keyword>
<keyword id="KW-0333">Golgi apparatus</keyword>
<keyword id="KW-1017">Isopeptide bond</keyword>
<keyword id="KW-0539">Nucleus</keyword>
<keyword id="KW-0597">Phosphoprotein</keyword>
<keyword id="KW-1185">Reference proteome</keyword>
<keyword id="KW-0677">Repeat</keyword>
<keyword id="KW-0727">SH2 domain</keyword>
<keyword id="KW-0728">SH3 domain</keyword>
<keyword id="KW-0832">Ubl conjugation</keyword>